<organism>
    <name type="scientific">Escherichia coli O157:H7</name>
    <dbReference type="NCBI Taxonomy" id="83334"/>
    <lineage>
        <taxon>Bacteria</taxon>
        <taxon>Pseudomonadati</taxon>
        <taxon>Pseudomonadota</taxon>
        <taxon>Gammaproteobacteria</taxon>
        <taxon>Enterobacterales</taxon>
        <taxon>Enterobacteriaceae</taxon>
        <taxon>Escherichia</taxon>
    </lineage>
</organism>
<evidence type="ECO:0000250" key="1"/>
<evidence type="ECO:0000255" key="2"/>
<evidence type="ECO:0000255" key="3">
    <source>
        <dbReference type="PROSITE-ProRule" id="PRU00102"/>
    </source>
</evidence>
<evidence type="ECO:0000255" key="4">
    <source>
        <dbReference type="PROSITE-ProRule" id="PRU00107"/>
    </source>
</evidence>
<evidence type="ECO:0000255" key="5">
    <source>
        <dbReference type="PROSITE-ProRule" id="PRU00110"/>
    </source>
</evidence>
<evidence type="ECO:0000255" key="6">
    <source>
        <dbReference type="PROSITE-ProRule" id="PRU00169"/>
    </source>
</evidence>
<protein>
    <recommendedName>
        <fullName>Signal transduction histidine-protein kinase BarA</fullName>
        <ecNumber>2.7.13.3</ecNumber>
    </recommendedName>
</protein>
<proteinExistence type="inferred from homology"/>
<accession>P0AEC7</accession>
<accession>P26607</accession>
<accession>P77032</accession>
<reference key="1">
    <citation type="journal article" date="2001" name="Nature">
        <title>Genome sequence of enterohaemorrhagic Escherichia coli O157:H7.</title>
        <authorList>
            <person name="Perna N.T."/>
            <person name="Plunkett G. III"/>
            <person name="Burland V."/>
            <person name="Mau B."/>
            <person name="Glasner J.D."/>
            <person name="Rose D.J."/>
            <person name="Mayhew G.F."/>
            <person name="Evans P.S."/>
            <person name="Gregor J."/>
            <person name="Kirkpatrick H.A."/>
            <person name="Posfai G."/>
            <person name="Hackett J."/>
            <person name="Klink S."/>
            <person name="Boutin A."/>
            <person name="Shao Y."/>
            <person name="Miller L."/>
            <person name="Grotbeck E.J."/>
            <person name="Davis N.W."/>
            <person name="Lim A."/>
            <person name="Dimalanta E.T."/>
            <person name="Potamousis K."/>
            <person name="Apodaca J."/>
            <person name="Anantharaman T.S."/>
            <person name="Lin J."/>
            <person name="Yen G."/>
            <person name="Schwartz D.C."/>
            <person name="Welch R.A."/>
            <person name="Blattner F.R."/>
        </authorList>
    </citation>
    <scope>NUCLEOTIDE SEQUENCE [LARGE SCALE GENOMIC DNA]</scope>
    <source>
        <strain>O157:H7 / EDL933 / ATCC 700927 / EHEC</strain>
    </source>
</reference>
<reference key="2">
    <citation type="journal article" date="2001" name="DNA Res.">
        <title>Complete genome sequence of enterohemorrhagic Escherichia coli O157:H7 and genomic comparison with a laboratory strain K-12.</title>
        <authorList>
            <person name="Hayashi T."/>
            <person name="Makino K."/>
            <person name="Ohnishi M."/>
            <person name="Kurokawa K."/>
            <person name="Ishii K."/>
            <person name="Yokoyama K."/>
            <person name="Han C.-G."/>
            <person name="Ohtsubo E."/>
            <person name="Nakayama K."/>
            <person name="Murata T."/>
            <person name="Tanaka M."/>
            <person name="Tobe T."/>
            <person name="Iida T."/>
            <person name="Takami H."/>
            <person name="Honda T."/>
            <person name="Sasakawa C."/>
            <person name="Ogasawara N."/>
            <person name="Yasunaga T."/>
            <person name="Kuhara S."/>
            <person name="Shiba T."/>
            <person name="Hattori M."/>
            <person name="Shinagawa H."/>
        </authorList>
    </citation>
    <scope>NUCLEOTIDE SEQUENCE [LARGE SCALE GENOMIC DNA]</scope>
    <source>
        <strain>O157:H7 / Sakai / RIMD 0509952 / EHEC</strain>
    </source>
</reference>
<sequence>MTNYSLRARMMILILAPTVLIGLLLSIFFVVHRYNDLQRQLEDAGASIIEPLAVSTEYGMSLQNRESIGQLISVLHRRHSDIVRAISVYDENNRLFVTSNFHLDPSSMQLGSNVPFPRQLTVTRDGDIMILRTPIISESYSPDESPSSDAKNSQNMLGYIALELDLKSVRLQQYKEIFISSVMMLFCIGIALIFGWRLMRDVTGPIRNMVNTVDRIRRGQLDSRVEGFMLGELDMLKNGINSMAMSLAAYHEEMQHNIDQATSDLRETLEQMEIQNVELDLAKKRAQEAARIKSEFLANMSHELRTPLNGVIGFTRLTLKTELTPTQRDHLNTIERSANNLLAIINDVLDFSKLEAGKLILESIPFPLRSTLDEVVTLLAHSSHDKGLELTLNIKSDVPDNVIGDPLRLQQIITNLVGNAIKFTENGNIDILVEKRALSNTKVQIEVQIRDTGIGIPERDQSRLFQAFRQADASISRRHGGTGLGLVITQKLVNEMGGDISFHSQPNRGSTFWFHINLDLNPNIIIEGPSTQCLAGKRLAYVEPNSAAAQCTLDILSETPLEVVYSPTFSALPPAHYDMMLLGIAVTFREPLTMQHERLAKAVSMTDFLMLALPCHAQVNAEKLKQDGIGACLLKPLTPTRLLPALTEFCHHKQNTLLPVTDESKLAMTVMAVDDNPANLKLIGALLEDMVQHVELCDSGHQAVERAKQMPFDLILMDIQMPDMDGIRACELIHQLPHQQQTPVIAVTAHAMAGQKEKLLGAGMSDYLAKPIEEERLHNLLLRYKPGSGISSRVVTPEVNEIVVNPNATLDWQLALRQAAGKTDLARDMLQMLLDFLPEVRNKVEEQLVGENPEGLVDLIHKLHGSCGYSGVPRMKNLCQLIEQQLRSGTKEEDLEPELLELLDEMDNVAREASKILG</sequence>
<comment type="function">
    <text evidence="1">Member of the two-component regulatory system UvrY/BarA involved in the regulation of carbon metabolism via the CsrA/CsrB regulatory system. Phosphorylates UvrY, probably via a four-step phosphorelay (By similarity).</text>
</comment>
<comment type="catalytic activity">
    <reaction>
        <text>ATP + protein L-histidine = ADP + protein N-phospho-L-histidine.</text>
        <dbReference type="EC" id="2.7.13.3"/>
    </reaction>
</comment>
<comment type="subcellular location">
    <subcellularLocation>
        <location evidence="1">Cell inner membrane</location>
        <topology evidence="1">Multi-pass membrane protein</topology>
    </subcellularLocation>
</comment>
<comment type="PTM">
    <text evidence="1">Activation requires a sequential transfer of a phosphate group from a His in the primary transmitter domain, to an Asp in the receiver domain and to a His in the secondary transmitter domain.</text>
</comment>
<dbReference type="EC" id="2.7.13.3"/>
<dbReference type="EMBL" id="AE005174">
    <property type="protein sequence ID" value="AAG57899.1"/>
    <property type="molecule type" value="Genomic_DNA"/>
</dbReference>
<dbReference type="EMBL" id="BA000007">
    <property type="protein sequence ID" value="BAB37069.1"/>
    <property type="molecule type" value="Genomic_DNA"/>
</dbReference>
<dbReference type="PIR" id="F91084">
    <property type="entry name" value="F91084"/>
</dbReference>
<dbReference type="RefSeq" id="NP_311673.1">
    <property type="nucleotide sequence ID" value="NC_002695.1"/>
</dbReference>
<dbReference type="RefSeq" id="WP_000186450.1">
    <property type="nucleotide sequence ID" value="NZ_VOAI01000003.1"/>
</dbReference>
<dbReference type="SMR" id="P0AEC7"/>
<dbReference type="STRING" id="155864.Z4101"/>
<dbReference type="GeneID" id="75203823"/>
<dbReference type="GeneID" id="916559"/>
<dbReference type="KEGG" id="ece:Z4101"/>
<dbReference type="KEGG" id="ecs:ECs_3646"/>
<dbReference type="PATRIC" id="fig|386585.9.peg.3810"/>
<dbReference type="eggNOG" id="COG2205">
    <property type="taxonomic scope" value="Bacteria"/>
</dbReference>
<dbReference type="eggNOG" id="COG3437">
    <property type="taxonomic scope" value="Bacteria"/>
</dbReference>
<dbReference type="eggNOG" id="COG3850">
    <property type="taxonomic scope" value="Bacteria"/>
</dbReference>
<dbReference type="eggNOG" id="COG4999">
    <property type="taxonomic scope" value="Bacteria"/>
</dbReference>
<dbReference type="HOGENOM" id="CLU_000445_104_1_6"/>
<dbReference type="OMA" id="NDATRYL"/>
<dbReference type="BRENDA" id="2.7.13.3">
    <property type="organism ID" value="2026"/>
</dbReference>
<dbReference type="Proteomes" id="UP000000558">
    <property type="component" value="Chromosome"/>
</dbReference>
<dbReference type="Proteomes" id="UP000002519">
    <property type="component" value="Chromosome"/>
</dbReference>
<dbReference type="GO" id="GO:0005886">
    <property type="term" value="C:plasma membrane"/>
    <property type="evidence" value="ECO:0007669"/>
    <property type="project" value="UniProtKB-SubCell"/>
</dbReference>
<dbReference type="GO" id="GO:0005524">
    <property type="term" value="F:ATP binding"/>
    <property type="evidence" value="ECO:0007669"/>
    <property type="project" value="UniProtKB-KW"/>
</dbReference>
<dbReference type="GO" id="GO:0000155">
    <property type="term" value="F:phosphorelay sensor kinase activity"/>
    <property type="evidence" value="ECO:0007669"/>
    <property type="project" value="InterPro"/>
</dbReference>
<dbReference type="CDD" id="cd06225">
    <property type="entry name" value="HAMP"/>
    <property type="match status" value="1"/>
</dbReference>
<dbReference type="CDD" id="cd16922">
    <property type="entry name" value="HATPase_EvgS-ArcB-TorS-like"/>
    <property type="match status" value="1"/>
</dbReference>
<dbReference type="CDD" id="cd00082">
    <property type="entry name" value="HisKA"/>
    <property type="match status" value="1"/>
</dbReference>
<dbReference type="CDD" id="cd00088">
    <property type="entry name" value="HPT"/>
    <property type="match status" value="1"/>
</dbReference>
<dbReference type="CDD" id="cd17546">
    <property type="entry name" value="REC_hyHK_CKI1_RcsC-like"/>
    <property type="match status" value="1"/>
</dbReference>
<dbReference type="FunFam" id="1.10.287.130:FF:000003">
    <property type="entry name" value="Histidine kinase"/>
    <property type="match status" value="1"/>
</dbReference>
<dbReference type="FunFam" id="1.20.120.160:FF:000002">
    <property type="entry name" value="Histidine kinase"/>
    <property type="match status" value="1"/>
</dbReference>
<dbReference type="FunFam" id="3.30.565.10:FF:000020">
    <property type="entry name" value="Histidine kinase"/>
    <property type="match status" value="1"/>
</dbReference>
<dbReference type="FunFam" id="3.40.50.2300:FF:000109">
    <property type="entry name" value="Histidine kinase"/>
    <property type="match status" value="1"/>
</dbReference>
<dbReference type="Gene3D" id="1.10.287.130">
    <property type="match status" value="1"/>
</dbReference>
<dbReference type="Gene3D" id="3.40.50.2300">
    <property type="match status" value="1"/>
</dbReference>
<dbReference type="Gene3D" id="6.10.340.10">
    <property type="match status" value="1"/>
</dbReference>
<dbReference type="Gene3D" id="3.30.565.10">
    <property type="entry name" value="Histidine kinase-like ATPase, C-terminal domain"/>
    <property type="match status" value="1"/>
</dbReference>
<dbReference type="Gene3D" id="1.20.120.160">
    <property type="entry name" value="HPT domain"/>
    <property type="match status" value="1"/>
</dbReference>
<dbReference type="InterPro" id="IPR011006">
    <property type="entry name" value="CheY-like_superfamily"/>
</dbReference>
<dbReference type="InterPro" id="IPR003660">
    <property type="entry name" value="HAMP_dom"/>
</dbReference>
<dbReference type="InterPro" id="IPR036890">
    <property type="entry name" value="HATPase_C_sf"/>
</dbReference>
<dbReference type="InterPro" id="IPR005467">
    <property type="entry name" value="His_kinase_dom"/>
</dbReference>
<dbReference type="InterPro" id="IPR003661">
    <property type="entry name" value="HisK_dim/P_dom"/>
</dbReference>
<dbReference type="InterPro" id="IPR036097">
    <property type="entry name" value="HisK_dim/P_sf"/>
</dbReference>
<dbReference type="InterPro" id="IPR019247">
    <property type="entry name" value="Histidine_kinase_BarA_N"/>
</dbReference>
<dbReference type="InterPro" id="IPR036641">
    <property type="entry name" value="HPT_dom_sf"/>
</dbReference>
<dbReference type="InterPro" id="IPR004358">
    <property type="entry name" value="Sig_transdc_His_kin-like_C"/>
</dbReference>
<dbReference type="InterPro" id="IPR008207">
    <property type="entry name" value="Sig_transdc_His_kin_Hpt_dom"/>
</dbReference>
<dbReference type="InterPro" id="IPR001789">
    <property type="entry name" value="Sig_transdc_resp-reg_receiver"/>
</dbReference>
<dbReference type="NCBIfam" id="NF008318">
    <property type="entry name" value="PRK11107.1"/>
    <property type="match status" value="1"/>
</dbReference>
<dbReference type="PANTHER" id="PTHR45339">
    <property type="entry name" value="HYBRID SIGNAL TRANSDUCTION HISTIDINE KINASE J"/>
    <property type="match status" value="1"/>
</dbReference>
<dbReference type="PANTHER" id="PTHR45339:SF1">
    <property type="entry name" value="HYBRID SIGNAL TRANSDUCTION HISTIDINE KINASE J"/>
    <property type="match status" value="1"/>
</dbReference>
<dbReference type="Pfam" id="PF00672">
    <property type="entry name" value="HAMP"/>
    <property type="match status" value="1"/>
</dbReference>
<dbReference type="Pfam" id="PF02518">
    <property type="entry name" value="HATPase_c"/>
    <property type="match status" value="1"/>
</dbReference>
<dbReference type="Pfam" id="PF00512">
    <property type="entry name" value="HisKA"/>
    <property type="match status" value="1"/>
</dbReference>
<dbReference type="Pfam" id="PF01627">
    <property type="entry name" value="Hpt"/>
    <property type="match status" value="1"/>
</dbReference>
<dbReference type="Pfam" id="PF00072">
    <property type="entry name" value="Response_reg"/>
    <property type="match status" value="1"/>
</dbReference>
<dbReference type="Pfam" id="PF09984">
    <property type="entry name" value="sCache_4"/>
    <property type="match status" value="1"/>
</dbReference>
<dbReference type="PRINTS" id="PR00344">
    <property type="entry name" value="BCTRLSENSOR"/>
</dbReference>
<dbReference type="SMART" id="SM00304">
    <property type="entry name" value="HAMP"/>
    <property type="match status" value="1"/>
</dbReference>
<dbReference type="SMART" id="SM00387">
    <property type="entry name" value="HATPase_c"/>
    <property type="match status" value="1"/>
</dbReference>
<dbReference type="SMART" id="SM00388">
    <property type="entry name" value="HisKA"/>
    <property type="match status" value="1"/>
</dbReference>
<dbReference type="SMART" id="SM00073">
    <property type="entry name" value="HPT"/>
    <property type="match status" value="1"/>
</dbReference>
<dbReference type="SMART" id="SM00448">
    <property type="entry name" value="REC"/>
    <property type="match status" value="1"/>
</dbReference>
<dbReference type="SUPFAM" id="SSF55874">
    <property type="entry name" value="ATPase domain of HSP90 chaperone/DNA topoisomerase II/histidine kinase"/>
    <property type="match status" value="1"/>
</dbReference>
<dbReference type="SUPFAM" id="SSF52172">
    <property type="entry name" value="CheY-like"/>
    <property type="match status" value="1"/>
</dbReference>
<dbReference type="SUPFAM" id="SSF158472">
    <property type="entry name" value="HAMP domain-like"/>
    <property type="match status" value="1"/>
</dbReference>
<dbReference type="SUPFAM" id="SSF47226">
    <property type="entry name" value="Histidine-containing phosphotransfer domain, HPT domain"/>
    <property type="match status" value="1"/>
</dbReference>
<dbReference type="SUPFAM" id="SSF47384">
    <property type="entry name" value="Homodimeric domain of signal transducing histidine kinase"/>
    <property type="match status" value="1"/>
</dbReference>
<dbReference type="PROSITE" id="PS50885">
    <property type="entry name" value="HAMP"/>
    <property type="match status" value="1"/>
</dbReference>
<dbReference type="PROSITE" id="PS50109">
    <property type="entry name" value="HIS_KIN"/>
    <property type="match status" value="1"/>
</dbReference>
<dbReference type="PROSITE" id="PS50894">
    <property type="entry name" value="HPT"/>
    <property type="match status" value="1"/>
</dbReference>
<dbReference type="PROSITE" id="PS50110">
    <property type="entry name" value="RESPONSE_REGULATORY"/>
    <property type="match status" value="1"/>
</dbReference>
<keyword id="KW-0067">ATP-binding</keyword>
<keyword id="KW-0997">Cell inner membrane</keyword>
<keyword id="KW-1003">Cell membrane</keyword>
<keyword id="KW-0418">Kinase</keyword>
<keyword id="KW-0472">Membrane</keyword>
<keyword id="KW-0547">Nucleotide-binding</keyword>
<keyword id="KW-0597">Phosphoprotein</keyword>
<keyword id="KW-1185">Reference proteome</keyword>
<keyword id="KW-0804">Transcription</keyword>
<keyword id="KW-0805">Transcription regulation</keyword>
<keyword id="KW-0808">Transferase</keyword>
<keyword id="KW-0812">Transmembrane</keyword>
<keyword id="KW-1133">Transmembrane helix</keyword>
<keyword id="KW-0902">Two-component regulatory system</keyword>
<gene>
    <name type="primary">barA</name>
    <name type="ordered locus">Z4101</name>
    <name type="ordered locus">ECs3646</name>
</gene>
<name>BARA_ECO57</name>
<feature type="chain" id="PRO_0000074698" description="Signal transduction histidine-protein kinase BarA">
    <location>
        <begin position="1"/>
        <end position="918"/>
    </location>
</feature>
<feature type="topological domain" description="Cytoplasmic" evidence="2">
    <location>
        <begin position="1"/>
        <end position="9"/>
    </location>
</feature>
<feature type="transmembrane region" description="Helical" evidence="2">
    <location>
        <begin position="10"/>
        <end position="31"/>
    </location>
</feature>
<feature type="topological domain" description="Periplasmic" evidence="2">
    <location>
        <begin position="32"/>
        <end position="176"/>
    </location>
</feature>
<feature type="transmembrane region" description="Helical" evidence="2">
    <location>
        <begin position="177"/>
        <end position="196"/>
    </location>
</feature>
<feature type="topological domain" description="Cytoplasmic" evidence="2">
    <location>
        <begin position="197"/>
        <end position="918"/>
    </location>
</feature>
<feature type="domain" description="HAMP" evidence="3">
    <location>
        <begin position="200"/>
        <end position="252"/>
    </location>
</feature>
<feature type="domain" description="Histidine kinase" evidence="4">
    <location>
        <begin position="299"/>
        <end position="520"/>
    </location>
</feature>
<feature type="domain" description="Response regulatory" evidence="6">
    <location>
        <begin position="669"/>
        <end position="785"/>
    </location>
</feature>
<feature type="domain" description="HPt" evidence="5">
    <location>
        <begin position="822"/>
        <end position="918"/>
    </location>
</feature>
<feature type="modified residue" description="Phosphohistidine; by autocatalysis" evidence="4">
    <location>
        <position position="302"/>
    </location>
</feature>
<feature type="modified residue" description="4-aspartylphosphate" evidence="6">
    <location>
        <position position="718"/>
    </location>
</feature>
<feature type="modified residue" description="Phosphohistidine" evidence="5">
    <location>
        <position position="861"/>
    </location>
</feature>